<organism>
    <name type="scientific">Burkholderia lata (strain ATCC 17760 / DSM 23089 / LMG 22485 / NCIMB 9086 / R18194 / 383)</name>
    <dbReference type="NCBI Taxonomy" id="482957"/>
    <lineage>
        <taxon>Bacteria</taxon>
        <taxon>Pseudomonadati</taxon>
        <taxon>Pseudomonadota</taxon>
        <taxon>Betaproteobacteria</taxon>
        <taxon>Burkholderiales</taxon>
        <taxon>Burkholderiaceae</taxon>
        <taxon>Burkholderia</taxon>
        <taxon>Burkholderia cepacia complex</taxon>
    </lineage>
</organism>
<comment type="function">
    <text evidence="1">An essential GTPase which binds GTP, GDP and possibly (p)ppGpp with moderate affinity, with high nucleotide exchange rates and a fairly low GTP hydrolysis rate. Plays a role in control of the cell cycle, stress response, ribosome biogenesis and in those bacteria that undergo differentiation, in morphogenesis control.</text>
</comment>
<comment type="cofactor">
    <cofactor evidence="1">
        <name>Mg(2+)</name>
        <dbReference type="ChEBI" id="CHEBI:18420"/>
    </cofactor>
</comment>
<comment type="subunit">
    <text evidence="1">Monomer.</text>
</comment>
<comment type="subcellular location">
    <subcellularLocation>
        <location evidence="1">Cytoplasm</location>
    </subcellularLocation>
</comment>
<comment type="similarity">
    <text evidence="1">Belongs to the TRAFAC class OBG-HflX-like GTPase superfamily. OBG GTPase family.</text>
</comment>
<proteinExistence type="inferred from homology"/>
<name>OBG_BURL3</name>
<accession>Q39JU7</accession>
<evidence type="ECO:0000255" key="1">
    <source>
        <dbReference type="HAMAP-Rule" id="MF_01454"/>
    </source>
</evidence>
<evidence type="ECO:0000255" key="2">
    <source>
        <dbReference type="PROSITE-ProRule" id="PRU01231"/>
    </source>
</evidence>
<evidence type="ECO:0000256" key="3">
    <source>
        <dbReference type="SAM" id="MobiDB-lite"/>
    </source>
</evidence>
<reference key="1">
    <citation type="submission" date="2005-10" db="EMBL/GenBank/DDBJ databases">
        <title>Complete sequence of chromosome 1 of Burkholderia sp. 383.</title>
        <authorList>
            <consortium name="US DOE Joint Genome Institute"/>
            <person name="Copeland A."/>
            <person name="Lucas S."/>
            <person name="Lapidus A."/>
            <person name="Barry K."/>
            <person name="Detter J.C."/>
            <person name="Glavina T."/>
            <person name="Hammon N."/>
            <person name="Israni S."/>
            <person name="Pitluck S."/>
            <person name="Chain P."/>
            <person name="Malfatti S."/>
            <person name="Shin M."/>
            <person name="Vergez L."/>
            <person name="Schmutz J."/>
            <person name="Larimer F."/>
            <person name="Land M."/>
            <person name="Kyrpides N."/>
            <person name="Lykidis A."/>
            <person name="Richardson P."/>
        </authorList>
    </citation>
    <scope>NUCLEOTIDE SEQUENCE [LARGE SCALE GENOMIC DNA]</scope>
    <source>
        <strain>ATCC 17760 / DSM 23089 / LMG 22485 / NCIMB 9086 / R18194 / 383</strain>
    </source>
</reference>
<feature type="chain" id="PRO_0000385793" description="GTPase Obg">
    <location>
        <begin position="1"/>
        <end position="370"/>
    </location>
</feature>
<feature type="domain" description="Obg" evidence="2">
    <location>
        <begin position="1"/>
        <end position="159"/>
    </location>
</feature>
<feature type="domain" description="OBG-type G" evidence="1">
    <location>
        <begin position="160"/>
        <end position="334"/>
    </location>
</feature>
<feature type="region of interest" description="Disordered" evidence="3">
    <location>
        <begin position="127"/>
        <end position="146"/>
    </location>
</feature>
<feature type="binding site" evidence="1">
    <location>
        <begin position="166"/>
        <end position="173"/>
    </location>
    <ligand>
        <name>GTP</name>
        <dbReference type="ChEBI" id="CHEBI:37565"/>
    </ligand>
</feature>
<feature type="binding site" evidence="1">
    <location>
        <position position="173"/>
    </location>
    <ligand>
        <name>Mg(2+)</name>
        <dbReference type="ChEBI" id="CHEBI:18420"/>
    </ligand>
</feature>
<feature type="binding site" evidence="1">
    <location>
        <begin position="191"/>
        <end position="195"/>
    </location>
    <ligand>
        <name>GTP</name>
        <dbReference type="ChEBI" id="CHEBI:37565"/>
    </ligand>
</feature>
<feature type="binding site" evidence="1">
    <location>
        <position position="193"/>
    </location>
    <ligand>
        <name>Mg(2+)</name>
        <dbReference type="ChEBI" id="CHEBI:18420"/>
    </ligand>
</feature>
<feature type="binding site" evidence="1">
    <location>
        <begin position="213"/>
        <end position="216"/>
    </location>
    <ligand>
        <name>GTP</name>
        <dbReference type="ChEBI" id="CHEBI:37565"/>
    </ligand>
</feature>
<feature type="binding site" evidence="1">
    <location>
        <begin position="284"/>
        <end position="287"/>
    </location>
    <ligand>
        <name>GTP</name>
        <dbReference type="ChEBI" id="CHEBI:37565"/>
    </ligand>
</feature>
<feature type="binding site" evidence="1">
    <location>
        <begin position="315"/>
        <end position="317"/>
    </location>
    <ligand>
        <name>GTP</name>
        <dbReference type="ChEBI" id="CHEBI:37565"/>
    </ligand>
</feature>
<sequence>MKFIDEARIEVIAGDGGDGSASMRREKFVPFGGPDGGDGGRGGSVYAIADRNINTLIDYRYAKKHLARNGENGRGSDCYGKGGDDVTLRMPVGTIISDMDTGELIADLTEHDQQVMLAQGGSGGLGNLHFKSSTNRAPRQKTDGKPGERRMLRLELKVLADVGLLGMPNAGKSTFISSVSNARPKIADYPFTTLAPNLGVVRVGPSKSFVIADIPGLIEGAAEGAGLGHQFLRHLQRTGVLLHLVDLAPFDESVDPVAEATAIVGELRKYDEALYEKPRWLVLNKLDMVPEDERKARVADFLERFEWDGPVFEISALTGQGCEALCYAIYDYLAEHSDAHRAAEAEDLAADVRFRDEPPAKGGAAPGDDA</sequence>
<protein>
    <recommendedName>
        <fullName evidence="1">GTPase Obg</fullName>
        <ecNumber evidence="1">3.6.5.-</ecNumber>
    </recommendedName>
    <alternativeName>
        <fullName evidence="1">GTP-binding protein Obg</fullName>
    </alternativeName>
</protein>
<keyword id="KW-0963">Cytoplasm</keyword>
<keyword id="KW-0342">GTP-binding</keyword>
<keyword id="KW-0378">Hydrolase</keyword>
<keyword id="KW-0460">Magnesium</keyword>
<keyword id="KW-0479">Metal-binding</keyword>
<keyword id="KW-0547">Nucleotide-binding</keyword>
<dbReference type="EC" id="3.6.5.-" evidence="1"/>
<dbReference type="EMBL" id="CP000151">
    <property type="protein sequence ID" value="ABB07269.1"/>
    <property type="molecule type" value="Genomic_DNA"/>
</dbReference>
<dbReference type="RefSeq" id="WP_011350859.1">
    <property type="nucleotide sequence ID" value="NC_007510.1"/>
</dbReference>
<dbReference type="SMR" id="Q39JU7"/>
<dbReference type="GeneID" id="45093582"/>
<dbReference type="KEGG" id="bur:Bcep18194_A3668"/>
<dbReference type="PATRIC" id="fig|482957.22.peg.522"/>
<dbReference type="HOGENOM" id="CLU_011747_2_0_4"/>
<dbReference type="Proteomes" id="UP000002705">
    <property type="component" value="Chromosome 1"/>
</dbReference>
<dbReference type="GO" id="GO:0005737">
    <property type="term" value="C:cytoplasm"/>
    <property type="evidence" value="ECO:0007669"/>
    <property type="project" value="UniProtKB-SubCell"/>
</dbReference>
<dbReference type="GO" id="GO:0005525">
    <property type="term" value="F:GTP binding"/>
    <property type="evidence" value="ECO:0007669"/>
    <property type="project" value="UniProtKB-UniRule"/>
</dbReference>
<dbReference type="GO" id="GO:0003924">
    <property type="term" value="F:GTPase activity"/>
    <property type="evidence" value="ECO:0007669"/>
    <property type="project" value="UniProtKB-UniRule"/>
</dbReference>
<dbReference type="GO" id="GO:0000287">
    <property type="term" value="F:magnesium ion binding"/>
    <property type="evidence" value="ECO:0007669"/>
    <property type="project" value="InterPro"/>
</dbReference>
<dbReference type="GO" id="GO:0042254">
    <property type="term" value="P:ribosome biogenesis"/>
    <property type="evidence" value="ECO:0007669"/>
    <property type="project" value="UniProtKB-UniRule"/>
</dbReference>
<dbReference type="CDD" id="cd01898">
    <property type="entry name" value="Obg"/>
    <property type="match status" value="1"/>
</dbReference>
<dbReference type="FunFam" id="2.70.210.12:FF:000001">
    <property type="entry name" value="GTPase Obg"/>
    <property type="match status" value="1"/>
</dbReference>
<dbReference type="Gene3D" id="2.70.210.12">
    <property type="entry name" value="GTP1/OBG domain"/>
    <property type="match status" value="1"/>
</dbReference>
<dbReference type="Gene3D" id="3.40.50.300">
    <property type="entry name" value="P-loop containing nucleotide triphosphate hydrolases"/>
    <property type="match status" value="1"/>
</dbReference>
<dbReference type="HAMAP" id="MF_01454">
    <property type="entry name" value="GTPase_Obg"/>
    <property type="match status" value="1"/>
</dbReference>
<dbReference type="InterPro" id="IPR031167">
    <property type="entry name" value="G_OBG"/>
</dbReference>
<dbReference type="InterPro" id="IPR006073">
    <property type="entry name" value="GTP-bd"/>
</dbReference>
<dbReference type="InterPro" id="IPR014100">
    <property type="entry name" value="GTP-bd_Obg/CgtA"/>
</dbReference>
<dbReference type="InterPro" id="IPR006074">
    <property type="entry name" value="GTP1-OBG_CS"/>
</dbReference>
<dbReference type="InterPro" id="IPR006169">
    <property type="entry name" value="GTP1_OBG_dom"/>
</dbReference>
<dbReference type="InterPro" id="IPR036726">
    <property type="entry name" value="GTP1_OBG_dom_sf"/>
</dbReference>
<dbReference type="InterPro" id="IPR045086">
    <property type="entry name" value="OBG_GTPase"/>
</dbReference>
<dbReference type="InterPro" id="IPR027417">
    <property type="entry name" value="P-loop_NTPase"/>
</dbReference>
<dbReference type="NCBIfam" id="TIGR02729">
    <property type="entry name" value="Obg_CgtA"/>
    <property type="match status" value="1"/>
</dbReference>
<dbReference type="NCBIfam" id="NF008954">
    <property type="entry name" value="PRK12296.1"/>
    <property type="match status" value="1"/>
</dbReference>
<dbReference type="NCBIfam" id="NF008955">
    <property type="entry name" value="PRK12297.1"/>
    <property type="match status" value="1"/>
</dbReference>
<dbReference type="NCBIfam" id="NF008956">
    <property type="entry name" value="PRK12299.1"/>
    <property type="match status" value="1"/>
</dbReference>
<dbReference type="PANTHER" id="PTHR11702">
    <property type="entry name" value="DEVELOPMENTALLY REGULATED GTP-BINDING PROTEIN-RELATED"/>
    <property type="match status" value="1"/>
</dbReference>
<dbReference type="PANTHER" id="PTHR11702:SF31">
    <property type="entry name" value="MITOCHONDRIAL RIBOSOME-ASSOCIATED GTPASE 2"/>
    <property type="match status" value="1"/>
</dbReference>
<dbReference type="Pfam" id="PF01018">
    <property type="entry name" value="GTP1_OBG"/>
    <property type="match status" value="1"/>
</dbReference>
<dbReference type="Pfam" id="PF01926">
    <property type="entry name" value="MMR_HSR1"/>
    <property type="match status" value="1"/>
</dbReference>
<dbReference type="PIRSF" id="PIRSF002401">
    <property type="entry name" value="GTP_bd_Obg/CgtA"/>
    <property type="match status" value="1"/>
</dbReference>
<dbReference type="PRINTS" id="PR00326">
    <property type="entry name" value="GTP1OBG"/>
</dbReference>
<dbReference type="SUPFAM" id="SSF82051">
    <property type="entry name" value="Obg GTP-binding protein N-terminal domain"/>
    <property type="match status" value="1"/>
</dbReference>
<dbReference type="SUPFAM" id="SSF52540">
    <property type="entry name" value="P-loop containing nucleoside triphosphate hydrolases"/>
    <property type="match status" value="1"/>
</dbReference>
<dbReference type="PROSITE" id="PS51710">
    <property type="entry name" value="G_OBG"/>
    <property type="match status" value="1"/>
</dbReference>
<dbReference type="PROSITE" id="PS00905">
    <property type="entry name" value="GTP1_OBG"/>
    <property type="match status" value="1"/>
</dbReference>
<dbReference type="PROSITE" id="PS51883">
    <property type="entry name" value="OBG"/>
    <property type="match status" value="1"/>
</dbReference>
<gene>
    <name evidence="1" type="primary">obg</name>
    <name type="ordered locus">Bcep18194_A3668</name>
</gene>